<protein>
    <recommendedName>
        <fullName evidence="1">Urease accessory protein UreD</fullName>
    </recommendedName>
</protein>
<keyword id="KW-0143">Chaperone</keyword>
<keyword id="KW-0963">Cytoplasm</keyword>
<keyword id="KW-0533">Nickel</keyword>
<keyword id="KW-1185">Reference proteome</keyword>
<sequence>MTTSAASWRSDPADPSVASARERALRQRSEGRVRITASAFGGVTRLTDLAEGGALRARLPRGGPGLEAVIVNTAGGVACGDVFSIEAKAGPGAHLTVATPAAEKVYRSDGLCADIQVRLVAEAGARLDWLPQETILFDRARLRRRYEIDLSATASFLSFEALMLGRLAHGDAMGEGHLEDHWRLRRDGALIFADALRLAGPMGALLARPAVAGGNRALATLLYVAPDAEARLEEARALLDAARCEAGASAWNGLLCVRLLAPDIETLRRDATSFLMAFRNAPLPRVWAT</sequence>
<organism>
    <name type="scientific">Xanthobacter autotrophicus (strain ATCC BAA-1158 / Py2)</name>
    <dbReference type="NCBI Taxonomy" id="78245"/>
    <lineage>
        <taxon>Bacteria</taxon>
        <taxon>Pseudomonadati</taxon>
        <taxon>Pseudomonadota</taxon>
        <taxon>Alphaproteobacteria</taxon>
        <taxon>Hyphomicrobiales</taxon>
        <taxon>Xanthobacteraceae</taxon>
        <taxon>Xanthobacter</taxon>
    </lineage>
</organism>
<comment type="function">
    <text evidence="1">Required for maturation of urease via the functional incorporation of the urease nickel metallocenter.</text>
</comment>
<comment type="subunit">
    <text evidence="1">UreD, UreF and UreG form a complex that acts as a GTP-hydrolysis-dependent molecular chaperone, activating the urease apoprotein by helping to assemble the nickel containing metallocenter of UreC. The UreE protein probably delivers the nickel.</text>
</comment>
<comment type="subcellular location">
    <subcellularLocation>
        <location evidence="1">Cytoplasm</location>
    </subcellularLocation>
</comment>
<comment type="similarity">
    <text evidence="1">Belongs to the UreD family.</text>
</comment>
<dbReference type="EMBL" id="CP000781">
    <property type="protein sequence ID" value="ABS69376.1"/>
    <property type="molecule type" value="Genomic_DNA"/>
</dbReference>
<dbReference type="SMR" id="A7IMY3"/>
<dbReference type="STRING" id="78245.Xaut_4154"/>
<dbReference type="KEGG" id="xau:Xaut_4154"/>
<dbReference type="eggNOG" id="COG0829">
    <property type="taxonomic scope" value="Bacteria"/>
</dbReference>
<dbReference type="HOGENOM" id="CLU_056339_2_0_5"/>
<dbReference type="OrthoDB" id="9798842at2"/>
<dbReference type="PhylomeDB" id="A7IMY3"/>
<dbReference type="Proteomes" id="UP000002417">
    <property type="component" value="Chromosome"/>
</dbReference>
<dbReference type="GO" id="GO:0005737">
    <property type="term" value="C:cytoplasm"/>
    <property type="evidence" value="ECO:0007669"/>
    <property type="project" value="UniProtKB-SubCell"/>
</dbReference>
<dbReference type="GO" id="GO:0016151">
    <property type="term" value="F:nickel cation binding"/>
    <property type="evidence" value="ECO:0007669"/>
    <property type="project" value="UniProtKB-UniRule"/>
</dbReference>
<dbReference type="HAMAP" id="MF_01384">
    <property type="entry name" value="UreD"/>
    <property type="match status" value="1"/>
</dbReference>
<dbReference type="InterPro" id="IPR002669">
    <property type="entry name" value="UreD"/>
</dbReference>
<dbReference type="PANTHER" id="PTHR33643">
    <property type="entry name" value="UREASE ACCESSORY PROTEIN D"/>
    <property type="match status" value="1"/>
</dbReference>
<dbReference type="PANTHER" id="PTHR33643:SF1">
    <property type="entry name" value="UREASE ACCESSORY PROTEIN D"/>
    <property type="match status" value="1"/>
</dbReference>
<dbReference type="Pfam" id="PF01774">
    <property type="entry name" value="UreD"/>
    <property type="match status" value="1"/>
</dbReference>
<evidence type="ECO:0000255" key="1">
    <source>
        <dbReference type="HAMAP-Rule" id="MF_01384"/>
    </source>
</evidence>
<name>URED_XANP2</name>
<feature type="chain" id="PRO_0000346613" description="Urease accessory protein UreD">
    <location>
        <begin position="1"/>
        <end position="289"/>
    </location>
</feature>
<reference key="1">
    <citation type="submission" date="2007-07" db="EMBL/GenBank/DDBJ databases">
        <title>Complete sequence of chromosome of Xanthobacter autotrophicus Py2.</title>
        <authorList>
            <consortium name="US DOE Joint Genome Institute"/>
            <person name="Copeland A."/>
            <person name="Lucas S."/>
            <person name="Lapidus A."/>
            <person name="Barry K."/>
            <person name="Glavina del Rio T."/>
            <person name="Hammon N."/>
            <person name="Israni S."/>
            <person name="Dalin E."/>
            <person name="Tice H."/>
            <person name="Pitluck S."/>
            <person name="Sims D."/>
            <person name="Brettin T."/>
            <person name="Bruce D."/>
            <person name="Detter J.C."/>
            <person name="Han C."/>
            <person name="Tapia R."/>
            <person name="Brainard J."/>
            <person name="Schmutz J."/>
            <person name="Larimer F."/>
            <person name="Land M."/>
            <person name="Hauser L."/>
            <person name="Kyrpides N."/>
            <person name="Kim E."/>
            <person name="Ensigns S.A."/>
            <person name="Richardson P."/>
        </authorList>
    </citation>
    <scope>NUCLEOTIDE SEQUENCE [LARGE SCALE GENOMIC DNA]</scope>
    <source>
        <strain>ATCC BAA-1158 / Py2</strain>
    </source>
</reference>
<proteinExistence type="inferred from homology"/>
<accession>A7IMY3</accession>
<gene>
    <name evidence="1" type="primary">ureD</name>
    <name type="ordered locus">Xaut_4154</name>
</gene>